<name>DUF8_ARATH</name>
<protein>
    <recommendedName>
        <fullName evidence="5">DUF724 domain-containing protein 8</fullName>
        <shortName evidence="4">AtDUF8</shortName>
    </recommendedName>
</protein>
<organism>
    <name type="scientific">Arabidopsis thaliana</name>
    <name type="common">Mouse-ear cress</name>
    <dbReference type="NCBI Taxonomy" id="3702"/>
    <lineage>
        <taxon>Eukaryota</taxon>
        <taxon>Viridiplantae</taxon>
        <taxon>Streptophyta</taxon>
        <taxon>Embryophyta</taxon>
        <taxon>Tracheophyta</taxon>
        <taxon>Spermatophyta</taxon>
        <taxon>Magnoliopsida</taxon>
        <taxon>eudicotyledons</taxon>
        <taxon>Gunneridae</taxon>
        <taxon>Pentapetalae</taxon>
        <taxon>rosids</taxon>
        <taxon>malvids</taxon>
        <taxon>Brassicales</taxon>
        <taxon>Brassicaceae</taxon>
        <taxon>Camelineae</taxon>
        <taxon>Arabidopsis</taxon>
    </lineage>
</organism>
<feature type="chain" id="PRO_0000436426" description="DUF724 domain-containing protein 8">
    <location>
        <begin position="1"/>
        <end position="421"/>
    </location>
</feature>
<feature type="domain" description="DUF724" evidence="1">
    <location>
        <begin position="246"/>
        <end position="420"/>
    </location>
</feature>
<feature type="region of interest" description="Disordered" evidence="2">
    <location>
        <begin position="149"/>
        <end position="229"/>
    </location>
</feature>
<feature type="coiled-coil region" evidence="1">
    <location>
        <begin position="361"/>
        <end position="397"/>
    </location>
</feature>
<feature type="compositionally biased region" description="Polar residues" evidence="2">
    <location>
        <begin position="149"/>
        <end position="165"/>
    </location>
</feature>
<feature type="compositionally biased region" description="Polar residues" evidence="2">
    <location>
        <begin position="199"/>
        <end position="213"/>
    </location>
</feature>
<proteinExistence type="evidence at transcript level"/>
<evidence type="ECO:0000255" key="1"/>
<evidence type="ECO:0000256" key="2">
    <source>
        <dbReference type="SAM" id="MobiDB-lite"/>
    </source>
</evidence>
<evidence type="ECO:0000269" key="3">
    <source>
    </source>
</evidence>
<evidence type="ECO:0000303" key="4">
    <source>
    </source>
</evidence>
<evidence type="ECO:0000305" key="5"/>
<evidence type="ECO:0000305" key="6">
    <source>
    </source>
</evidence>
<evidence type="ECO:0000312" key="7">
    <source>
        <dbReference type="Araport" id="AT5G23770"/>
    </source>
</evidence>
<evidence type="ECO:0000312" key="8">
    <source>
        <dbReference type="EMBL" id="BAB10050.1"/>
    </source>
</evidence>
<keyword id="KW-0025">Alternative splicing</keyword>
<keyword id="KW-0175">Coiled coil</keyword>
<keyword id="KW-0341">Growth regulation</keyword>
<keyword id="KW-0539">Nucleus</keyword>
<keyword id="KW-1185">Reference proteome</keyword>
<keyword id="KW-0813">Transport</keyword>
<sequence>MFSPGTMVEVSSKINEGEVVWVPSMVIKEFKEDDEYKYIVKDKSFSCEGKKARPNKTVDLSSLRPIPVSVDEYQLEENVEVFLDGMGWRHGRVMGSQERAIGTLSQKWYFVRLESTKKQLTFKQSDLRPLKVWEDGVWKVLQTRELSFTQGSGDKTGDSVRNANESDPPLTPPPGIITPPLKQIEAGTQRKALSKKTLPRNQNGSGNDSTLENENSEDNNRKRKREENLGCVASVEQDKPKDTTMVLPFEKKLRIWETLESMEVFKTVPQSPHFSPLLVESREDSREMSAVGMMLTFFGLLDEVKALQHNDPISFFISLTNSFAELEKHGFNVKAPQSRINKLLSLRDRQSKKTEELKDAEKVTAEKESVKAENKRKILELQRLNEEMDKEIAQSKSCAAKIVQQLDDVKLEFLATASAPW</sequence>
<comment type="function">
    <text evidence="6">May be involved in the polar growth of plant cells via transportation of RNAs.</text>
</comment>
<comment type="subcellular location">
    <subcellularLocation>
        <location evidence="3">Nucleus</location>
    </subcellularLocation>
</comment>
<comment type="alternative products">
    <event type="alternative splicing"/>
    <isoform>
        <id>F4KEA4-1</id>
        <name>1</name>
        <sequence type="displayed"/>
    </isoform>
    <text evidence="5">A number of isoforms are produced. According to EST sequences.</text>
</comment>
<comment type="tissue specificity">
    <text evidence="3">Expressed in leaves and flowers, and at lower levels in roots, stems and siliques.</text>
</comment>
<comment type="disruption phenotype">
    <text evidence="3">No visible phenotype under normal growth conditions.</text>
</comment>
<comment type="sequence caution" evidence="5">
    <conflict type="erroneous gene model prediction">
        <sequence resource="EMBL-CDS" id="BAB10050"/>
    </conflict>
</comment>
<dbReference type="EMBL" id="AB005244">
    <property type="protein sequence ID" value="BAB10050.1"/>
    <property type="status" value="ALT_SEQ"/>
    <property type="molecule type" value="Genomic_DNA"/>
</dbReference>
<dbReference type="EMBL" id="CP002688">
    <property type="status" value="NOT_ANNOTATED_CDS"/>
    <property type="molecule type" value="Genomic_DNA"/>
</dbReference>
<dbReference type="SMR" id="F4KEA4"/>
<dbReference type="GlyGen" id="F4KEA4">
    <property type="glycosylation" value="1 site"/>
</dbReference>
<dbReference type="PaxDb" id="3702-AT5G23770.2"/>
<dbReference type="ProteomicsDB" id="222185">
    <molecule id="F4KEA4-1"/>
</dbReference>
<dbReference type="Araport" id="AT5G23770"/>
<dbReference type="TAIR" id="AT5G23770">
    <property type="gene designation" value="DUF8"/>
</dbReference>
<dbReference type="eggNOG" id="ENOG502QTQX">
    <property type="taxonomic scope" value="Eukaryota"/>
</dbReference>
<dbReference type="HOGENOM" id="CLU_007138_1_1_1"/>
<dbReference type="InParanoid" id="F4KEA4"/>
<dbReference type="PRO" id="PR:F4KEA4"/>
<dbReference type="Proteomes" id="UP000006548">
    <property type="component" value="Chromosome 5"/>
</dbReference>
<dbReference type="ExpressionAtlas" id="F4KEA4">
    <property type="expression patterns" value="baseline and differential"/>
</dbReference>
<dbReference type="GO" id="GO:0005634">
    <property type="term" value="C:nucleus"/>
    <property type="evidence" value="ECO:0000314"/>
    <property type="project" value="UniProtKB"/>
</dbReference>
<dbReference type="CDD" id="cd20405">
    <property type="entry name" value="Tudor_Agenet_AtDUF_rpt1_3"/>
    <property type="match status" value="1"/>
</dbReference>
<dbReference type="CDD" id="cd20406">
    <property type="entry name" value="Tudor_Agenet_AtDUF_rpt2_4"/>
    <property type="match status" value="1"/>
</dbReference>
<dbReference type="InterPro" id="IPR008395">
    <property type="entry name" value="Agenet-like_dom"/>
</dbReference>
<dbReference type="InterPro" id="IPR014002">
    <property type="entry name" value="Agenet_dom_plant"/>
</dbReference>
<dbReference type="InterPro" id="IPR007930">
    <property type="entry name" value="DUF724"/>
</dbReference>
<dbReference type="PANTHER" id="PTHR31917">
    <property type="entry name" value="AGENET DOMAIN-CONTAINING PROTEIN-RELATED"/>
    <property type="match status" value="1"/>
</dbReference>
<dbReference type="PANTHER" id="PTHR31917:SF50">
    <property type="entry name" value="DUF724 DOMAIN-CONTAINING PROTEIN 1-RELATED"/>
    <property type="match status" value="1"/>
</dbReference>
<dbReference type="Pfam" id="PF05641">
    <property type="entry name" value="Agenet"/>
    <property type="match status" value="1"/>
</dbReference>
<dbReference type="Pfam" id="PF05266">
    <property type="entry name" value="DUF724"/>
    <property type="match status" value="1"/>
</dbReference>
<dbReference type="SMART" id="SM00743">
    <property type="entry name" value="Agenet"/>
    <property type="match status" value="2"/>
</dbReference>
<gene>
    <name evidence="4" type="primary">DUF8</name>
    <name evidence="7" type="ordered locus">At5g23770</name>
    <name evidence="8" type="ORF">MRO11.19</name>
</gene>
<reference key="1">
    <citation type="journal article" date="1997" name="DNA Res.">
        <title>Structural analysis of Arabidopsis thaliana chromosome 5. I. Sequence features of the 1.6 Mb regions covered by twenty physically assigned P1 clones.</title>
        <authorList>
            <person name="Sato S."/>
            <person name="Kotani H."/>
            <person name="Nakamura Y."/>
            <person name="Kaneko T."/>
            <person name="Asamizu E."/>
            <person name="Fukami M."/>
            <person name="Miyajima N."/>
            <person name="Tabata S."/>
        </authorList>
    </citation>
    <scope>NUCLEOTIDE SEQUENCE [LARGE SCALE GENOMIC DNA]</scope>
    <source>
        <strain>cv. Columbia</strain>
    </source>
</reference>
<reference key="2">
    <citation type="journal article" date="2017" name="Plant J.">
        <title>Araport11: a complete reannotation of the Arabidopsis thaliana reference genome.</title>
        <authorList>
            <person name="Cheng C.Y."/>
            <person name="Krishnakumar V."/>
            <person name="Chan A.P."/>
            <person name="Thibaud-Nissen F."/>
            <person name="Schobel S."/>
            <person name="Town C.D."/>
        </authorList>
    </citation>
    <scope>GENOME REANNOTATION</scope>
    <source>
        <strain>cv. Columbia</strain>
    </source>
</reference>
<reference key="3">
    <citation type="journal article" date="2010" name="Plant Mol. Biol.">
        <title>Characterization of DUF724 gene family in Arabidopsis thaliana.</title>
        <authorList>
            <person name="Cao X."/>
            <person name="Yang K.Z."/>
            <person name="Xia C."/>
            <person name="Zhang X.Q."/>
            <person name="Chen L.Q."/>
            <person name="Ye D."/>
        </authorList>
    </citation>
    <scope>FUNCTION</scope>
    <scope>GENE FAMILY</scope>
    <scope>NOMENCLATURE</scope>
    <scope>SUBCELLULAR LOCATION</scope>
    <scope>TISSUE SPECIFICITY</scope>
    <scope>DISRUPTION PHENOTYPE</scope>
</reference>
<accession>F4KEA4</accession>
<accession>Q9FFA3</accession>